<organism>
    <name type="scientific">Parasynechococcus marenigrum (strain WH8102)</name>
    <dbReference type="NCBI Taxonomy" id="84588"/>
    <lineage>
        <taxon>Bacteria</taxon>
        <taxon>Bacillati</taxon>
        <taxon>Cyanobacteriota</taxon>
        <taxon>Cyanophyceae</taxon>
        <taxon>Synechococcales</taxon>
        <taxon>Prochlorococcaceae</taxon>
        <taxon>Parasynechococcus</taxon>
        <taxon>Parasynechococcus marenigrum</taxon>
    </lineage>
</organism>
<feature type="chain" id="PRO_0000081475" description="Probable 2-phosphosulfolactate phosphatase">
    <location>
        <begin position="1"/>
        <end position="242"/>
    </location>
</feature>
<gene>
    <name evidence="1" type="primary">comB</name>
    <name type="ordered locus">SYNW1007</name>
</gene>
<accession>Q7U7H6</accession>
<comment type="catalytic activity">
    <reaction evidence="1">
        <text>(2R)-O-phospho-3-sulfolactate + H2O = (2R)-3-sulfolactate + phosphate</text>
        <dbReference type="Rhea" id="RHEA:23416"/>
        <dbReference type="ChEBI" id="CHEBI:15377"/>
        <dbReference type="ChEBI" id="CHEBI:15597"/>
        <dbReference type="ChEBI" id="CHEBI:43474"/>
        <dbReference type="ChEBI" id="CHEBI:58738"/>
        <dbReference type="EC" id="3.1.3.71"/>
    </reaction>
</comment>
<comment type="cofactor">
    <cofactor evidence="1">
        <name>Mg(2+)</name>
        <dbReference type="ChEBI" id="CHEBI:18420"/>
    </cofactor>
</comment>
<comment type="similarity">
    <text evidence="1">Belongs to the ComB family.</text>
</comment>
<reference key="1">
    <citation type="journal article" date="2003" name="Nature">
        <title>The genome of a motile marine Synechococcus.</title>
        <authorList>
            <person name="Palenik B."/>
            <person name="Brahamsha B."/>
            <person name="Larimer F.W."/>
            <person name="Land M.L."/>
            <person name="Hauser L."/>
            <person name="Chain P."/>
            <person name="Lamerdin J.E."/>
            <person name="Regala W."/>
            <person name="Allen E.E."/>
            <person name="McCarren J."/>
            <person name="Paulsen I.T."/>
            <person name="Dufresne A."/>
            <person name="Partensky F."/>
            <person name="Webb E.A."/>
            <person name="Waterbury J."/>
        </authorList>
    </citation>
    <scope>NUCLEOTIDE SEQUENCE [LARGE SCALE GENOMIC DNA]</scope>
    <source>
        <strain>WH8102</strain>
    </source>
</reference>
<evidence type="ECO:0000255" key="1">
    <source>
        <dbReference type="HAMAP-Rule" id="MF_00490"/>
    </source>
</evidence>
<dbReference type="EC" id="3.1.3.71" evidence="1"/>
<dbReference type="EMBL" id="BX569691">
    <property type="protein sequence ID" value="CAE07522.1"/>
    <property type="molecule type" value="Genomic_DNA"/>
</dbReference>
<dbReference type="RefSeq" id="WP_011127872.1">
    <property type="nucleotide sequence ID" value="NC_005070.1"/>
</dbReference>
<dbReference type="SMR" id="Q7U7H6"/>
<dbReference type="STRING" id="84588.SYNW1007"/>
<dbReference type="KEGG" id="syw:SYNW1007"/>
<dbReference type="eggNOG" id="COG2045">
    <property type="taxonomic scope" value="Bacteria"/>
</dbReference>
<dbReference type="HOGENOM" id="CLU_070028_0_1_3"/>
<dbReference type="Proteomes" id="UP000001422">
    <property type="component" value="Chromosome"/>
</dbReference>
<dbReference type="GO" id="GO:0050532">
    <property type="term" value="F:2-phosphosulfolactate phosphatase activity"/>
    <property type="evidence" value="ECO:0007669"/>
    <property type="project" value="UniProtKB-UniRule"/>
</dbReference>
<dbReference type="GO" id="GO:0000287">
    <property type="term" value="F:magnesium ion binding"/>
    <property type="evidence" value="ECO:0007669"/>
    <property type="project" value="UniProtKB-UniRule"/>
</dbReference>
<dbReference type="GO" id="GO:0050545">
    <property type="term" value="F:sulfopyruvate decarboxylase activity"/>
    <property type="evidence" value="ECO:0007669"/>
    <property type="project" value="TreeGrafter"/>
</dbReference>
<dbReference type="FunFam" id="3.90.1560.10:FF:000001">
    <property type="entry name" value="Probable 2-phosphosulfolactate phosphatase"/>
    <property type="match status" value="1"/>
</dbReference>
<dbReference type="Gene3D" id="3.90.1560.10">
    <property type="entry name" value="ComB-like"/>
    <property type="match status" value="1"/>
</dbReference>
<dbReference type="HAMAP" id="MF_00490">
    <property type="entry name" value="ComB"/>
    <property type="match status" value="1"/>
</dbReference>
<dbReference type="InterPro" id="IPR005238">
    <property type="entry name" value="ComB-like"/>
</dbReference>
<dbReference type="InterPro" id="IPR036702">
    <property type="entry name" value="ComB-like_sf"/>
</dbReference>
<dbReference type="NCBIfam" id="NF002053">
    <property type="entry name" value="PRK00886.1-2"/>
    <property type="match status" value="1"/>
</dbReference>
<dbReference type="PANTHER" id="PTHR37311">
    <property type="entry name" value="2-PHOSPHOSULFOLACTATE PHOSPHATASE-RELATED"/>
    <property type="match status" value="1"/>
</dbReference>
<dbReference type="PANTHER" id="PTHR37311:SF1">
    <property type="entry name" value="2-PHOSPHOSULFOLACTATE PHOSPHATASE-RELATED"/>
    <property type="match status" value="1"/>
</dbReference>
<dbReference type="Pfam" id="PF04029">
    <property type="entry name" value="2-ph_phosp"/>
    <property type="match status" value="1"/>
</dbReference>
<dbReference type="SUPFAM" id="SSF142823">
    <property type="entry name" value="ComB-like"/>
    <property type="match status" value="1"/>
</dbReference>
<sequence>MQIFYFHVPAEMPADASPDAAVVIDVLRATTTIAWALHHGAEAVQAFADLEDLRAAAEAWPADQRLLLGERGGQTLAGFDLGNSPVAVVPATVSGKRLFMSTTNGTRALDRVRQVPLLVTAALPNREAVAQRLLKESPETVAIVGSGWEGTYSLEDSLAAGALAARLQELSQAVTLANDEATAATALWQQWRHDPEACLRTASHGQRLIRLGDHDDDFRCCAGLDQLSVVPTQQSPGVLQAI</sequence>
<name>COMB_PARMW</name>
<proteinExistence type="inferred from homology"/>
<keyword id="KW-0378">Hydrolase</keyword>
<keyword id="KW-0460">Magnesium</keyword>
<protein>
    <recommendedName>
        <fullName evidence="1">Probable 2-phosphosulfolactate phosphatase</fullName>
        <ecNumber evidence="1">3.1.3.71</ecNumber>
    </recommendedName>
</protein>